<accession>P34213</accession>
<feature type="chain" id="PRO_0000121118" description="Ras-related protein rab-6.1">
    <location>
        <begin position="1"/>
        <end position="205"/>
    </location>
</feature>
<feature type="binding site" evidence="1">
    <location>
        <begin position="18"/>
        <end position="25"/>
    </location>
    <ligand>
        <name>GTP</name>
        <dbReference type="ChEBI" id="CHEBI:37565"/>
    </ligand>
</feature>
<feature type="binding site" evidence="1">
    <location>
        <position position="43"/>
    </location>
    <ligand>
        <name>GTP</name>
        <dbReference type="ChEBI" id="CHEBI:37565"/>
    </ligand>
</feature>
<feature type="binding site" evidence="1">
    <location>
        <begin position="66"/>
        <end position="70"/>
    </location>
    <ligand>
        <name>GTP</name>
        <dbReference type="ChEBI" id="CHEBI:37565"/>
    </ligand>
</feature>
<feature type="binding site" evidence="1">
    <location>
        <begin position="124"/>
        <end position="127"/>
    </location>
    <ligand>
        <name>GTP</name>
        <dbReference type="ChEBI" id="CHEBI:37565"/>
    </ligand>
</feature>
<feature type="modified residue" description="Cysteine methyl ester" evidence="1">
    <location>
        <position position="205"/>
    </location>
</feature>
<feature type="lipid moiety-binding region" description="S-geranylgeranyl cysteine" evidence="1">
    <location>
        <position position="203"/>
    </location>
</feature>
<feature type="lipid moiety-binding region" description="S-geranylgeranyl cysteine" evidence="1">
    <location>
        <position position="205"/>
    </location>
</feature>
<feature type="mutagenesis site" description="Constitutively inactive (GDP-locked form). Diffusely localized. Fails to localize to the cortical granules in oocytes. Does not recruit sep-1 to cortical granules in embryos following fertilization. In glr-1 expressing neurons reduces the number of glr-1-positive puncta in a rab-6.2 tm2254 mutant background." evidence="3 4">
    <original>T</original>
    <variation>N</variation>
    <location>
        <position position="25"/>
    </location>
</feature>
<feature type="mutagenesis site" description="Constitutively active (GTP-locked form). Localizes to the cortical granules in oocytes. Recruits sep-1 to cortical granules in embryos following fertilization." evidence="3">
    <original>Q</original>
    <variation>L</variation>
    <location>
        <position position="70"/>
    </location>
</feature>
<proteinExistence type="evidence at protein level"/>
<comment type="function">
    <text evidence="3 4 5">The small GTPases Rab are key regulators of intracellular membrane trafficking, from the formation of transport vesicles to their fusion with membranes (PubMed:22992455, PubMed:26891225). Rabs cycle between an inactive GDP-bound form and an active GTP-bound form that is able to recruit to membranes different set of downstream effectors directly responsible for vesicle formation, movement, tethering and fusion (PubMed:22992455, PubMed:26891225). In its active GTP-bound form, acts redundantly with rab-6.2 (in its active GTP-bound form) to positively regulate the retrograde trafficking of cargo molecules from endosomes to Golgi structures (PubMed:26891225). Required for the retrograde trafficking of glr-1, a subunit of AMPA-type glutamate receptors (AMPRs), out of early endosomes and into the Golgi compartment in neurons (PubMed:26891225). Together with rab-6.2, promotes the retrograde trafficking of mig-14 from endosomes to Golgi structures in the intestine (PubMed:26891225). In oocytes, in its active GTP-bound form, involved in the membrane fusion and exocytosis of secretory vesicles (cortical granules) to play a role in the remodeling of the embryo surface following fertilization (PubMed:22992455). Recruits sep-1 to cortical granules (derived from the Golgi complex) for exocytosis during the oocyte-to-embryo transition (PubMed:22992455). Required for seam cell division and alae formation (PubMed:33826611). Promotes spontaneous reversals in locomotion (PubMed:26891225).</text>
</comment>
<comment type="subunit">
    <text evidence="2">Interacts with GARP complex component vps-52.</text>
</comment>
<comment type="subcellular location">
    <subcellularLocation>
        <location evidence="3">Cell membrane</location>
        <topology evidence="6">Lipid-anchor</topology>
        <orientation evidence="6">Cytoplasmic side</orientation>
    </subcellularLocation>
    <subcellularLocation>
        <location evidence="4">Cell projection</location>
        <location evidence="4">Dendrite</location>
    </subcellularLocation>
    <subcellularLocation>
        <location evidence="4">Perikaryon</location>
    </subcellularLocation>
    <subcellularLocation>
        <location evidence="2 4">Golgi apparatus</location>
    </subcellularLocation>
    <subcellularLocation>
        <location evidence="3">Cytoplasmic vesicle</location>
        <location evidence="3">Secretory vesicle</location>
    </subcellularLocation>
    <text evidence="2 3 4">Following fertilization, localizes to cav-1-positive vesicles tethered to the plasma membrane (PubMed:22992455). Localization becomes dispersed throughout the cytoplasm once the vesicles fuse with the plasma membrane during meiotic anaphase I (PubMed:22992455). Temporarily co-localizes with sep-1 in the cortical granules prior to membrane fusion (PubMed:22992455). Co-localizes with rab-11.1-positive vesicles near the plasma membrane until vesicle exocytosis in embryos (PubMed:22992455). Co-localizes with rab-6.2 at vesicular structures throughout the oocyte cytoplasm (PubMed:22992455). Co-localizes with rab-6.2 in neuronal cell bodies and dendrites and in Golgi structures in neurons and the intestine (PubMed:26891225). Co-localizes with vps-52 at Golgi structures (PubMed:21613545).</text>
</comment>
<comment type="tissue specificity">
    <text evidence="4">Highly expressed in body wall muscle, intestine, somatic gonad, distal tip cells, vulva, and neurons including AVB, AVD, RIG, and PVC (at protein level) (PubMed:26891225). Not expressed in AVA and RMDV neurons (PubMed:26891225).</text>
</comment>
<comment type="disruption phenotype">
    <text evidence="3 4 5">Sterile with fertilized embryos failing to develop in the gonad (PubMed:22992455, PubMed:26891225). This may be due to cytokinesis defects in embryos and increased permeability of the embryonic surface to exogenous small molecules (PubMed:22992455). Furthermore, the exocytosis of cortical granules following fertilization is delayed and only partially occurs (PubMed:22992455). Another study suggested that sterility may be due to abnormalities in the hermaphrodite sperm (PubMed:26891225). Lowers rate of spontaneous reversals in locomotion (PubMed:26891225). Decreases the number of mig-14-positive puncta in the intestine and results in mig-14 accumulation in early endosome, late endosome and lysosome structures which are adjacent to Golgi structures (PubMed:26891225). Decreases the number of glr-1-positive puncta along the ventral nerve cord, indicative of defective glr-1 trafficking (PubMed:26891225). RNAi-mediated knockdown results in cytokinesis defects in embryos and increases the permeability of the embryonic surface to exogenous small molecules (PubMed:22992455). RNAi-mediated knockdown impairs incorporation of cav-1 into the cytoplasm of cortical granules and abolishes the recruitment of sep-1 to cortical granules in embryos resulting in defective exocytosis of cortical granules following fertilization (PubMed:22992455). RNAi-mediated knockdown results in the accumulation of unsecreted cav-1-positive cortical granules near the plasma membrane of the embryo following fertilization (PubMed:22992455). RNAi-mediated knockdown disrupts seam cell division and alae formation (PubMed:33826611). RNAi-mediated knockdown suppresses the seam cell division and alae formation defects in the tbc-11 ok2576 mutant (PubMed:33826611). RNAi-mediated knockdown in glr-1 expressing neurons further reduces the number of glr-1-positive puncta in a rab-6.2 tm2254 mutant background (PubMed:26891225).</text>
</comment>
<comment type="similarity">
    <text evidence="6">Belongs to the small GTPase superfamily. Rab family.</text>
</comment>
<keyword id="KW-1003">Cell membrane</keyword>
<keyword id="KW-0966">Cell projection</keyword>
<keyword id="KW-0968">Cytoplasmic vesicle</keyword>
<keyword id="KW-0333">Golgi apparatus</keyword>
<keyword id="KW-0342">GTP-binding</keyword>
<keyword id="KW-0449">Lipoprotein</keyword>
<keyword id="KW-0472">Membrane</keyword>
<keyword id="KW-0488">Methylation</keyword>
<keyword id="KW-0547">Nucleotide-binding</keyword>
<keyword id="KW-0636">Prenylation</keyword>
<keyword id="KW-0653">Protein transport</keyword>
<keyword id="KW-1185">Reference proteome</keyword>
<keyword id="KW-0813">Transport</keyword>
<gene>
    <name evidence="7" type="primary">rab-6.1</name>
    <name evidence="7" type="ORF">F59B2.7</name>
</gene>
<sequence length="205" mass="23259">MADFTNNALKKFKLVFLGEQSVGKTSIITRFMYDSFDNTYQATIGIDFLSKTMYLEDRTIRLQLWDTAGQERFRSLIPSYIRDSSVAVVVYDITNANSFHQTTKWVDDVRNERGCDVIIVLVGNKTDLADKRQVSTEDGEKKARDLNVMFIETSAKAGYNVKQLFRKIATALPGIVQEETPEQPNIVIMNPPKDAEESQGRQCPC</sequence>
<reference key="1">
    <citation type="journal article" date="1994" name="Nature">
        <title>2.2 Mb of contiguous nucleotide sequence from chromosome III of C. elegans.</title>
        <authorList>
            <person name="Wilson R."/>
            <person name="Ainscough R."/>
            <person name="Anderson K."/>
            <person name="Baynes C."/>
            <person name="Berks M."/>
            <person name="Bonfield J."/>
            <person name="Burton J."/>
            <person name="Connell M."/>
            <person name="Copsey T."/>
            <person name="Cooper J."/>
            <person name="Coulson A."/>
            <person name="Craxton M."/>
            <person name="Dear S."/>
            <person name="Du Z."/>
            <person name="Durbin R."/>
            <person name="Favello A."/>
            <person name="Fraser A."/>
            <person name="Fulton L."/>
            <person name="Gardner A."/>
            <person name="Green P."/>
            <person name="Hawkins T."/>
            <person name="Hillier L."/>
            <person name="Jier M."/>
            <person name="Johnston L."/>
            <person name="Jones M."/>
            <person name="Kershaw J."/>
            <person name="Kirsten J."/>
            <person name="Laisster N."/>
            <person name="Latreille P."/>
            <person name="Lightning J."/>
            <person name="Lloyd C."/>
            <person name="Mortimore B."/>
            <person name="O'Callaghan M."/>
            <person name="Parsons J."/>
            <person name="Percy C."/>
            <person name="Rifken L."/>
            <person name="Roopra A."/>
            <person name="Saunders D."/>
            <person name="Shownkeen R."/>
            <person name="Sims M."/>
            <person name="Smaldon N."/>
            <person name="Smith A."/>
            <person name="Smith M."/>
            <person name="Sonnhammer E."/>
            <person name="Staden R."/>
            <person name="Sulston J."/>
            <person name="Thierry-Mieg J."/>
            <person name="Thomas K."/>
            <person name="Vaudin M."/>
            <person name="Vaughan K."/>
            <person name="Waterston R."/>
            <person name="Watson A."/>
            <person name="Weinstock L."/>
            <person name="Wilkinson-Sproat J."/>
            <person name="Wohldman P."/>
        </authorList>
    </citation>
    <scope>NUCLEOTIDE SEQUENCE [LARGE SCALE GENOMIC DNA]</scope>
    <source>
        <strain>Bristol N2</strain>
    </source>
</reference>
<reference key="2">
    <citation type="journal article" date="1998" name="Science">
        <title>Genome sequence of the nematode C. elegans: a platform for investigating biology.</title>
        <authorList>
            <consortium name="The C. elegans sequencing consortium"/>
        </authorList>
    </citation>
    <scope>NUCLEOTIDE SEQUENCE [LARGE SCALE GENOMIC DNA]</scope>
    <source>
        <strain>Bristol N2</strain>
    </source>
</reference>
<reference key="3">
    <citation type="journal article" date="2011" name="Mol. Biol. Cell">
        <title>The Caenorhabditis elegans GARP complex contains the conserved Vps51 subunit and is required to maintain lysosomal morphology.</title>
        <authorList>
            <person name="Luo L."/>
            <person name="Hannemann M."/>
            <person name="Koenig S."/>
            <person name="Hegermann J."/>
            <person name="Ailion M."/>
            <person name="Cho M.K."/>
            <person name="Sasidharan N."/>
            <person name="Zweckstetter M."/>
            <person name="Rensing S.A."/>
            <person name="Eimer S."/>
        </authorList>
    </citation>
    <scope>INTERACTION WITH VPS-52</scope>
    <scope>SUBCELLULAR LOCATION</scope>
</reference>
<reference key="4">
    <citation type="journal article" date="2012" name="J. Cell Sci.">
        <title>Rab6 is required for the exocytosis of cortical granules and the recruitment of separase to the granules during the oocyte-to-embryo transition in Caenorhabditis elegans.</title>
        <authorList>
            <person name="Kimura K."/>
            <person name="Kimura A."/>
        </authorList>
    </citation>
    <scope>FUNCTION</scope>
    <scope>SUBCELLULAR LOCATION</scope>
    <scope>DISRUPTION PHENOTYPE</scope>
    <scope>MUTAGENESIS OF THR-25 AND GLN-70</scope>
</reference>
<reference key="5">
    <citation type="journal article" date="2016" name="PLoS ONE">
        <title>RAB-6.1 and RAB-6.2 Promote Retrograde Transport in C. elegans.</title>
        <authorList>
            <person name="Zhang D."/>
            <person name="Dubey J."/>
            <person name="Koushika S.P."/>
            <person name="Rongo C."/>
        </authorList>
    </citation>
    <scope>FUNCTION</scope>
    <scope>SUBCELLULAR LOCATION</scope>
    <scope>TISSUE SPECIFICITY</scope>
    <scope>DISRUPTION PHENOTYPE</scope>
    <scope>MUTAGENESIS OF THR-25</scope>
</reference>
<reference key="6">
    <citation type="journal article" date="2021" name="PLoS Genet.">
        <title>The RabGAP TBC-11 controls Argonaute localization for proper microRNA function in C. elegans.</title>
        <authorList>
            <person name="Michaud P."/>
            <person name="Shah V.N."/>
            <person name="Adjibade P."/>
            <person name="Houle F."/>
            <person name="Quevillon Huberdeau M."/>
            <person name="Rioux R."/>
            <person name="Lavoie-Ouellet C."/>
            <person name="Gu W."/>
            <person name="Mazroui R."/>
            <person name="Simard M.J."/>
        </authorList>
    </citation>
    <scope>FUNCTION</scope>
    <scope>DISRUPTION PHENOTYPE</scope>
</reference>
<protein>
    <recommendedName>
        <fullName>Ras-related protein rab-6.1</fullName>
    </recommendedName>
</protein>
<organism>
    <name type="scientific">Caenorhabditis elegans</name>
    <dbReference type="NCBI Taxonomy" id="6239"/>
    <lineage>
        <taxon>Eukaryota</taxon>
        <taxon>Metazoa</taxon>
        <taxon>Ecdysozoa</taxon>
        <taxon>Nematoda</taxon>
        <taxon>Chromadorea</taxon>
        <taxon>Rhabditida</taxon>
        <taxon>Rhabditina</taxon>
        <taxon>Rhabditomorpha</taxon>
        <taxon>Rhabditoidea</taxon>
        <taxon>Rhabditidae</taxon>
        <taxon>Peloderinae</taxon>
        <taxon>Caenorhabditis</taxon>
    </lineage>
</organism>
<evidence type="ECO:0000250" key="1"/>
<evidence type="ECO:0000269" key="2">
    <source>
    </source>
</evidence>
<evidence type="ECO:0000269" key="3">
    <source>
    </source>
</evidence>
<evidence type="ECO:0000269" key="4">
    <source>
    </source>
</evidence>
<evidence type="ECO:0000269" key="5">
    <source>
    </source>
</evidence>
<evidence type="ECO:0000305" key="6"/>
<evidence type="ECO:0000312" key="7">
    <source>
        <dbReference type="WormBase" id="F59B2.7"/>
    </source>
</evidence>
<name>RAB6A_CAEEL</name>
<dbReference type="EMBL" id="BX284603">
    <property type="protein sequence ID" value="CAA77590.1"/>
    <property type="molecule type" value="Genomic_DNA"/>
</dbReference>
<dbReference type="PIR" id="S31127">
    <property type="entry name" value="S31127"/>
</dbReference>
<dbReference type="RefSeq" id="NP_498993.1">
    <property type="nucleotide sequence ID" value="NM_066592.7"/>
</dbReference>
<dbReference type="SMR" id="P34213"/>
<dbReference type="BioGRID" id="41474">
    <property type="interactions" value="3"/>
</dbReference>
<dbReference type="FunCoup" id="P34213">
    <property type="interactions" value="218"/>
</dbReference>
<dbReference type="IntAct" id="P34213">
    <property type="interactions" value="1"/>
</dbReference>
<dbReference type="STRING" id="6239.F59B2.7.1"/>
<dbReference type="PaxDb" id="6239-F59B2.7"/>
<dbReference type="EnsemblMetazoa" id="F59B2.7.1">
    <property type="protein sequence ID" value="F59B2.7.1"/>
    <property type="gene ID" value="WBGene00004269"/>
</dbReference>
<dbReference type="GeneID" id="176275"/>
<dbReference type="KEGG" id="cel:CELE_F59B2.7"/>
<dbReference type="UCSC" id="F59B2.7.1">
    <property type="organism name" value="c. elegans"/>
</dbReference>
<dbReference type="AGR" id="WB:WBGene00004269"/>
<dbReference type="CTD" id="176275"/>
<dbReference type="WormBase" id="F59B2.7">
    <property type="protein sequence ID" value="CE00234"/>
    <property type="gene ID" value="WBGene00004269"/>
    <property type="gene designation" value="rab-6.1"/>
</dbReference>
<dbReference type="eggNOG" id="KOG0094">
    <property type="taxonomic scope" value="Eukaryota"/>
</dbReference>
<dbReference type="GeneTree" id="ENSGT00940000154769"/>
<dbReference type="HOGENOM" id="CLU_041217_10_2_1"/>
<dbReference type="InParanoid" id="P34213"/>
<dbReference type="OMA" id="PNIVIMN"/>
<dbReference type="OrthoDB" id="63533at2759"/>
<dbReference type="PhylomeDB" id="P34213"/>
<dbReference type="Reactome" id="R-CEL-6811436">
    <property type="pathway name" value="COPI-independent Golgi-to-ER retrograde traffic"/>
</dbReference>
<dbReference type="Reactome" id="R-CEL-6811438">
    <property type="pathway name" value="Intra-Golgi traffic"/>
</dbReference>
<dbReference type="Reactome" id="R-CEL-6811440">
    <property type="pathway name" value="Retrograde transport at the Trans-Golgi-Network"/>
</dbReference>
<dbReference type="Reactome" id="R-CEL-8854214">
    <property type="pathway name" value="TBC/RABGAPs"/>
</dbReference>
<dbReference type="Reactome" id="R-CEL-8873719">
    <property type="pathway name" value="RAB geranylgeranylation"/>
</dbReference>
<dbReference type="Reactome" id="R-CEL-8876198">
    <property type="pathway name" value="RAB GEFs exchange GTP for GDP on RABs"/>
</dbReference>
<dbReference type="PRO" id="PR:P34213"/>
<dbReference type="Proteomes" id="UP000001940">
    <property type="component" value="Chromosome III"/>
</dbReference>
<dbReference type="Bgee" id="WBGene00004269">
    <property type="expression patterns" value="Expressed in germ line (C elegans) and 4 other cell types or tissues"/>
</dbReference>
<dbReference type="GO" id="GO:0060473">
    <property type="term" value="C:cortical granule"/>
    <property type="evidence" value="ECO:0000314"/>
    <property type="project" value="WormBase"/>
</dbReference>
<dbReference type="GO" id="GO:0005737">
    <property type="term" value="C:cytoplasm"/>
    <property type="evidence" value="ECO:0000314"/>
    <property type="project" value="WormBase"/>
</dbReference>
<dbReference type="GO" id="GO:0005829">
    <property type="term" value="C:cytosol"/>
    <property type="evidence" value="ECO:0007669"/>
    <property type="project" value="GOC"/>
</dbReference>
<dbReference type="GO" id="GO:0030425">
    <property type="term" value="C:dendrite"/>
    <property type="evidence" value="ECO:0007669"/>
    <property type="project" value="UniProtKB-SubCell"/>
</dbReference>
<dbReference type="GO" id="GO:0012505">
    <property type="term" value="C:endomembrane system"/>
    <property type="evidence" value="ECO:0000318"/>
    <property type="project" value="GO_Central"/>
</dbReference>
<dbReference type="GO" id="GO:0005794">
    <property type="term" value="C:Golgi apparatus"/>
    <property type="evidence" value="ECO:0000318"/>
    <property type="project" value="GO_Central"/>
</dbReference>
<dbReference type="GO" id="GO:0031985">
    <property type="term" value="C:Golgi cisterna"/>
    <property type="evidence" value="ECO:0000314"/>
    <property type="project" value="WormBase"/>
</dbReference>
<dbReference type="GO" id="GO:0043204">
    <property type="term" value="C:perikaryon"/>
    <property type="evidence" value="ECO:0007669"/>
    <property type="project" value="UniProtKB-SubCell"/>
</dbReference>
<dbReference type="GO" id="GO:0005886">
    <property type="term" value="C:plasma membrane"/>
    <property type="evidence" value="ECO:0007669"/>
    <property type="project" value="UniProtKB-SubCell"/>
</dbReference>
<dbReference type="GO" id="GO:0030133">
    <property type="term" value="C:transport vesicle"/>
    <property type="evidence" value="ECO:0007669"/>
    <property type="project" value="UniProtKB-SubCell"/>
</dbReference>
<dbReference type="GO" id="GO:0005525">
    <property type="term" value="F:GTP binding"/>
    <property type="evidence" value="ECO:0007669"/>
    <property type="project" value="UniProtKB-KW"/>
</dbReference>
<dbReference type="GO" id="GO:0003924">
    <property type="term" value="F:GTPase activity"/>
    <property type="evidence" value="ECO:0000318"/>
    <property type="project" value="GO_Central"/>
</dbReference>
<dbReference type="GO" id="GO:0060471">
    <property type="term" value="P:cortical granule exocytosis"/>
    <property type="evidence" value="ECO:0000315"/>
    <property type="project" value="WormBase"/>
</dbReference>
<dbReference type="GO" id="GO:0042335">
    <property type="term" value="P:cuticle development"/>
    <property type="evidence" value="ECO:0000315"/>
    <property type="project" value="UniProtKB"/>
</dbReference>
<dbReference type="GO" id="GO:0006891">
    <property type="term" value="P:intra-Golgi vesicle-mediated transport"/>
    <property type="evidence" value="ECO:0000318"/>
    <property type="project" value="GO_Central"/>
</dbReference>
<dbReference type="GO" id="GO:0006886">
    <property type="term" value="P:intracellular protein transport"/>
    <property type="evidence" value="ECO:0000318"/>
    <property type="project" value="GO_Central"/>
</dbReference>
<dbReference type="GO" id="GO:0042147">
    <property type="term" value="P:retrograde transport, endosome to Golgi"/>
    <property type="evidence" value="ECO:0000318"/>
    <property type="project" value="GO_Central"/>
</dbReference>
<dbReference type="GO" id="GO:0006890">
    <property type="term" value="P:retrograde vesicle-mediated transport, Golgi to endoplasmic reticulum"/>
    <property type="evidence" value="ECO:0000318"/>
    <property type="project" value="GO_Central"/>
</dbReference>
<dbReference type="CDD" id="cd01861">
    <property type="entry name" value="Rab6"/>
    <property type="match status" value="1"/>
</dbReference>
<dbReference type="FunFam" id="3.40.50.300:FF:000229">
    <property type="entry name" value="Probable Ras-related protein Rab-6A"/>
    <property type="match status" value="1"/>
</dbReference>
<dbReference type="Gene3D" id="3.40.50.300">
    <property type="entry name" value="P-loop containing nucleotide triphosphate hydrolases"/>
    <property type="match status" value="1"/>
</dbReference>
<dbReference type="InterPro" id="IPR027417">
    <property type="entry name" value="P-loop_NTPase"/>
</dbReference>
<dbReference type="InterPro" id="IPR050227">
    <property type="entry name" value="Rab"/>
</dbReference>
<dbReference type="InterPro" id="IPR005225">
    <property type="entry name" value="Small_GTP-bd"/>
</dbReference>
<dbReference type="InterPro" id="IPR001806">
    <property type="entry name" value="Small_GTPase"/>
</dbReference>
<dbReference type="NCBIfam" id="TIGR00231">
    <property type="entry name" value="small_GTP"/>
    <property type="match status" value="1"/>
</dbReference>
<dbReference type="PANTHER" id="PTHR47977">
    <property type="entry name" value="RAS-RELATED PROTEIN RAB"/>
    <property type="match status" value="1"/>
</dbReference>
<dbReference type="Pfam" id="PF00071">
    <property type="entry name" value="Ras"/>
    <property type="match status" value="1"/>
</dbReference>
<dbReference type="PRINTS" id="PR00449">
    <property type="entry name" value="RASTRNSFRMNG"/>
</dbReference>
<dbReference type="SMART" id="SM00175">
    <property type="entry name" value="RAB"/>
    <property type="match status" value="1"/>
</dbReference>
<dbReference type="SMART" id="SM00176">
    <property type="entry name" value="RAN"/>
    <property type="match status" value="1"/>
</dbReference>
<dbReference type="SMART" id="SM00173">
    <property type="entry name" value="RAS"/>
    <property type="match status" value="1"/>
</dbReference>
<dbReference type="SMART" id="SM00174">
    <property type="entry name" value="RHO"/>
    <property type="match status" value="1"/>
</dbReference>
<dbReference type="SUPFAM" id="SSF52540">
    <property type="entry name" value="P-loop containing nucleoside triphosphate hydrolases"/>
    <property type="match status" value="1"/>
</dbReference>
<dbReference type="PROSITE" id="PS51419">
    <property type="entry name" value="RAB"/>
    <property type="match status" value="1"/>
</dbReference>